<evidence type="ECO:0000255" key="1">
    <source>
        <dbReference type="HAMAP-Rule" id="MF_00407"/>
    </source>
</evidence>
<name>DNLI_KORVE</name>
<dbReference type="EC" id="6.5.1.1" evidence="1"/>
<dbReference type="EMBL" id="CP000360">
    <property type="protein sequence ID" value="ABF43475.1"/>
    <property type="molecule type" value="Genomic_DNA"/>
</dbReference>
<dbReference type="RefSeq" id="WP_011525272.1">
    <property type="nucleotide sequence ID" value="NC_008009.1"/>
</dbReference>
<dbReference type="SMR" id="Q1II25"/>
<dbReference type="STRING" id="204669.Acid345_4475"/>
<dbReference type="EnsemblBacteria" id="ABF43475">
    <property type="protein sequence ID" value="ABF43475"/>
    <property type="gene ID" value="Acid345_4475"/>
</dbReference>
<dbReference type="KEGG" id="aba:Acid345_4475"/>
<dbReference type="eggNOG" id="COG1793">
    <property type="taxonomic scope" value="Bacteria"/>
</dbReference>
<dbReference type="HOGENOM" id="CLU_005138_6_0_0"/>
<dbReference type="OrthoDB" id="9767858at2"/>
<dbReference type="Proteomes" id="UP000002432">
    <property type="component" value="Chromosome"/>
</dbReference>
<dbReference type="GO" id="GO:0005524">
    <property type="term" value="F:ATP binding"/>
    <property type="evidence" value="ECO:0007669"/>
    <property type="project" value="UniProtKB-UniRule"/>
</dbReference>
<dbReference type="GO" id="GO:0003677">
    <property type="term" value="F:DNA binding"/>
    <property type="evidence" value="ECO:0007669"/>
    <property type="project" value="InterPro"/>
</dbReference>
<dbReference type="GO" id="GO:0003910">
    <property type="term" value="F:DNA ligase (ATP) activity"/>
    <property type="evidence" value="ECO:0007669"/>
    <property type="project" value="UniProtKB-UniRule"/>
</dbReference>
<dbReference type="GO" id="GO:0046872">
    <property type="term" value="F:metal ion binding"/>
    <property type="evidence" value="ECO:0007669"/>
    <property type="project" value="UniProtKB-KW"/>
</dbReference>
<dbReference type="GO" id="GO:0051301">
    <property type="term" value="P:cell division"/>
    <property type="evidence" value="ECO:0007669"/>
    <property type="project" value="UniProtKB-KW"/>
</dbReference>
<dbReference type="GO" id="GO:0071897">
    <property type="term" value="P:DNA biosynthetic process"/>
    <property type="evidence" value="ECO:0007669"/>
    <property type="project" value="InterPro"/>
</dbReference>
<dbReference type="GO" id="GO:0006310">
    <property type="term" value="P:DNA recombination"/>
    <property type="evidence" value="ECO:0007669"/>
    <property type="project" value="UniProtKB-UniRule"/>
</dbReference>
<dbReference type="GO" id="GO:0006281">
    <property type="term" value="P:DNA repair"/>
    <property type="evidence" value="ECO:0007669"/>
    <property type="project" value="UniProtKB-UniRule"/>
</dbReference>
<dbReference type="GO" id="GO:0006260">
    <property type="term" value="P:DNA replication"/>
    <property type="evidence" value="ECO:0007669"/>
    <property type="project" value="UniProtKB-UniRule"/>
</dbReference>
<dbReference type="CDD" id="cd07898">
    <property type="entry name" value="Adenylation_DNA_ligase"/>
    <property type="match status" value="1"/>
</dbReference>
<dbReference type="CDD" id="cd07972">
    <property type="entry name" value="OBF_DNA_ligase_Arch_LigB"/>
    <property type="match status" value="1"/>
</dbReference>
<dbReference type="Gene3D" id="1.10.3260.10">
    <property type="entry name" value="DNA ligase, ATP-dependent, N-terminal domain"/>
    <property type="match status" value="1"/>
</dbReference>
<dbReference type="Gene3D" id="3.30.470.30">
    <property type="entry name" value="DNA ligase/mRNA capping enzyme"/>
    <property type="match status" value="1"/>
</dbReference>
<dbReference type="Gene3D" id="2.40.50.140">
    <property type="entry name" value="Nucleic acid-binding proteins"/>
    <property type="match status" value="1"/>
</dbReference>
<dbReference type="HAMAP" id="MF_00407">
    <property type="entry name" value="DNA_ligase"/>
    <property type="match status" value="1"/>
</dbReference>
<dbReference type="InterPro" id="IPR050191">
    <property type="entry name" value="ATP-dep_DNA_ligase"/>
</dbReference>
<dbReference type="InterPro" id="IPR022865">
    <property type="entry name" value="DNA_ligae_ATP-dep_bac/arc"/>
</dbReference>
<dbReference type="InterPro" id="IPR000977">
    <property type="entry name" value="DNA_ligase_ATP-dep"/>
</dbReference>
<dbReference type="InterPro" id="IPR012309">
    <property type="entry name" value="DNA_ligase_ATP-dep_C"/>
</dbReference>
<dbReference type="InterPro" id="IPR012310">
    <property type="entry name" value="DNA_ligase_ATP-dep_cent"/>
</dbReference>
<dbReference type="InterPro" id="IPR016059">
    <property type="entry name" value="DNA_ligase_ATP-dep_CS"/>
</dbReference>
<dbReference type="InterPro" id="IPR012308">
    <property type="entry name" value="DNA_ligase_ATP-dep_N"/>
</dbReference>
<dbReference type="InterPro" id="IPR036599">
    <property type="entry name" value="DNA_ligase_N_sf"/>
</dbReference>
<dbReference type="InterPro" id="IPR012340">
    <property type="entry name" value="NA-bd_OB-fold"/>
</dbReference>
<dbReference type="NCBIfam" id="TIGR00574">
    <property type="entry name" value="dnl1"/>
    <property type="match status" value="1"/>
</dbReference>
<dbReference type="PANTHER" id="PTHR45674:SF4">
    <property type="entry name" value="DNA LIGASE 1"/>
    <property type="match status" value="1"/>
</dbReference>
<dbReference type="PANTHER" id="PTHR45674">
    <property type="entry name" value="DNA LIGASE 1/3 FAMILY MEMBER"/>
    <property type="match status" value="1"/>
</dbReference>
<dbReference type="Pfam" id="PF04679">
    <property type="entry name" value="DNA_ligase_A_C"/>
    <property type="match status" value="1"/>
</dbReference>
<dbReference type="Pfam" id="PF01068">
    <property type="entry name" value="DNA_ligase_A_M"/>
    <property type="match status" value="1"/>
</dbReference>
<dbReference type="Pfam" id="PF04675">
    <property type="entry name" value="DNA_ligase_A_N"/>
    <property type="match status" value="1"/>
</dbReference>
<dbReference type="SUPFAM" id="SSF117018">
    <property type="entry name" value="ATP-dependent DNA ligase DNA-binding domain"/>
    <property type="match status" value="1"/>
</dbReference>
<dbReference type="SUPFAM" id="SSF56091">
    <property type="entry name" value="DNA ligase/mRNA capping enzyme, catalytic domain"/>
    <property type="match status" value="1"/>
</dbReference>
<dbReference type="SUPFAM" id="SSF50249">
    <property type="entry name" value="Nucleic acid-binding proteins"/>
    <property type="match status" value="1"/>
</dbReference>
<dbReference type="PROSITE" id="PS00697">
    <property type="entry name" value="DNA_LIGASE_A1"/>
    <property type="match status" value="1"/>
</dbReference>
<dbReference type="PROSITE" id="PS50160">
    <property type="entry name" value="DNA_LIGASE_A3"/>
    <property type="match status" value="1"/>
</dbReference>
<sequence>MQLLAQTCEAIAATSKKTEKIAIVATYLQSRTVPEAALSTLFLSGRTFAAHEERTLQVGGSILWRVVGELSGASEAKMTAAYKRHGDLGDATLGVLRGVAPEESTLTLKEVDYMFQQIAAVSGPAAKSRLIVTLLARATAPEAKYLVKFITGELRIGLKESQVEEAIAKAYGRELAEVRRANMLVGDIGETLVLAAHDKLATARMRLFHPMGFMLATPAESANEAFAEFEHAIVEDKYDGIRAQAHISRDKVRIFSRTLDDITDSFPELIPALKAIEHEVILDGEILAWRCGQALAFSELQKRLGRKNVSAAMQREVPVSYVTFDLLYAKGQLVIDRPLQERAAMLDGIFSEGAPRLVNVDPHGQASLMFAEVTPEQRVLRAPQARADSPEELDRLFAAAQERGNEGLMIKDIHSAYAVGRRGKSWLKLKRELAMLDVVVTAVELGHGKRAGILSDYTFAVRGGEELLNIGKAYSGLTDKEIAEMDEWFRAHTLVDHGFVREVEPKIVIEVAFNAVMKSDRHASGFALRFPRILRIRDDKGGEEIDTLERAEEIYRSQFHQRTRRIHRGDTKAQSS</sequence>
<accession>Q1II25</accession>
<proteinExistence type="inferred from homology"/>
<gene>
    <name evidence="1" type="primary">lig</name>
    <name type="ordered locus">Acid345_4475</name>
</gene>
<organism>
    <name type="scientific">Koribacter versatilis (strain Ellin345)</name>
    <dbReference type="NCBI Taxonomy" id="204669"/>
    <lineage>
        <taxon>Bacteria</taxon>
        <taxon>Pseudomonadati</taxon>
        <taxon>Acidobacteriota</taxon>
        <taxon>Terriglobia</taxon>
        <taxon>Terriglobales</taxon>
        <taxon>Candidatus Korobacteraceae</taxon>
        <taxon>Candidatus Korobacter</taxon>
    </lineage>
</organism>
<protein>
    <recommendedName>
        <fullName evidence="1">Probable DNA ligase</fullName>
        <ecNumber evidence="1">6.5.1.1</ecNumber>
    </recommendedName>
    <alternativeName>
        <fullName evidence="1">Polydeoxyribonucleotide synthase [ATP]</fullName>
    </alternativeName>
</protein>
<reference key="1">
    <citation type="journal article" date="2009" name="Appl. Environ. Microbiol.">
        <title>Three genomes from the phylum Acidobacteria provide insight into the lifestyles of these microorganisms in soils.</title>
        <authorList>
            <person name="Ward N.L."/>
            <person name="Challacombe J.F."/>
            <person name="Janssen P.H."/>
            <person name="Henrissat B."/>
            <person name="Coutinho P.M."/>
            <person name="Wu M."/>
            <person name="Xie G."/>
            <person name="Haft D.H."/>
            <person name="Sait M."/>
            <person name="Badger J."/>
            <person name="Barabote R.D."/>
            <person name="Bradley B."/>
            <person name="Brettin T.S."/>
            <person name="Brinkac L.M."/>
            <person name="Bruce D."/>
            <person name="Creasy T."/>
            <person name="Daugherty S.C."/>
            <person name="Davidsen T.M."/>
            <person name="DeBoy R.T."/>
            <person name="Detter J.C."/>
            <person name="Dodson R.J."/>
            <person name="Durkin A.S."/>
            <person name="Ganapathy A."/>
            <person name="Gwinn-Giglio M."/>
            <person name="Han C.S."/>
            <person name="Khouri H."/>
            <person name="Kiss H."/>
            <person name="Kothari S.P."/>
            <person name="Madupu R."/>
            <person name="Nelson K.E."/>
            <person name="Nelson W.C."/>
            <person name="Paulsen I."/>
            <person name="Penn K."/>
            <person name="Ren Q."/>
            <person name="Rosovitz M.J."/>
            <person name="Selengut J.D."/>
            <person name="Shrivastava S."/>
            <person name="Sullivan S.A."/>
            <person name="Tapia R."/>
            <person name="Thompson L.S."/>
            <person name="Watkins K.L."/>
            <person name="Yang Q."/>
            <person name="Yu C."/>
            <person name="Zafar N."/>
            <person name="Zhou L."/>
            <person name="Kuske C.R."/>
        </authorList>
    </citation>
    <scope>NUCLEOTIDE SEQUENCE [LARGE SCALE GENOMIC DNA]</scope>
    <source>
        <strain>Ellin345</strain>
    </source>
</reference>
<feature type="chain" id="PRO_0000365215" description="Probable DNA ligase">
    <location>
        <begin position="1"/>
        <end position="576"/>
    </location>
</feature>
<feature type="active site" description="N6-AMP-lysine intermediate" evidence="1">
    <location>
        <position position="237"/>
    </location>
</feature>
<feature type="binding site" evidence="1">
    <location>
        <position position="235"/>
    </location>
    <ligand>
        <name>ATP</name>
        <dbReference type="ChEBI" id="CHEBI:30616"/>
    </ligand>
</feature>
<feature type="binding site" evidence="1">
    <location>
        <position position="242"/>
    </location>
    <ligand>
        <name>ATP</name>
        <dbReference type="ChEBI" id="CHEBI:30616"/>
    </ligand>
</feature>
<feature type="binding site" evidence="1">
    <location>
        <position position="257"/>
    </location>
    <ligand>
        <name>ATP</name>
        <dbReference type="ChEBI" id="CHEBI:30616"/>
    </ligand>
</feature>
<feature type="binding site" evidence="1">
    <location>
        <position position="285"/>
    </location>
    <ligand>
        <name>ATP</name>
        <dbReference type="ChEBI" id="CHEBI:30616"/>
    </ligand>
</feature>
<feature type="binding site" evidence="1">
    <location>
        <position position="324"/>
    </location>
    <ligand>
        <name>ATP</name>
        <dbReference type="ChEBI" id="CHEBI:30616"/>
    </ligand>
</feature>
<feature type="binding site" evidence="1">
    <location>
        <position position="422"/>
    </location>
    <ligand>
        <name>ATP</name>
        <dbReference type="ChEBI" id="CHEBI:30616"/>
    </ligand>
</feature>
<feature type="binding site" evidence="1">
    <location>
        <position position="428"/>
    </location>
    <ligand>
        <name>ATP</name>
        <dbReference type="ChEBI" id="CHEBI:30616"/>
    </ligand>
</feature>
<keyword id="KW-0067">ATP-binding</keyword>
<keyword id="KW-0131">Cell cycle</keyword>
<keyword id="KW-0132">Cell division</keyword>
<keyword id="KW-0227">DNA damage</keyword>
<keyword id="KW-0233">DNA recombination</keyword>
<keyword id="KW-0234">DNA repair</keyword>
<keyword id="KW-0235">DNA replication</keyword>
<keyword id="KW-0436">Ligase</keyword>
<keyword id="KW-0460">Magnesium</keyword>
<keyword id="KW-0479">Metal-binding</keyword>
<keyword id="KW-0547">Nucleotide-binding</keyword>
<keyword id="KW-1185">Reference proteome</keyword>
<comment type="function">
    <text evidence="1">DNA ligase that seals nicks in double-stranded DNA during DNA replication, DNA recombination and DNA repair.</text>
</comment>
<comment type="catalytic activity">
    <reaction evidence="1">
        <text>ATP + (deoxyribonucleotide)n-3'-hydroxyl + 5'-phospho-(deoxyribonucleotide)m = (deoxyribonucleotide)n+m + AMP + diphosphate.</text>
        <dbReference type="EC" id="6.5.1.1"/>
    </reaction>
</comment>
<comment type="cofactor">
    <cofactor evidence="1">
        <name>Mg(2+)</name>
        <dbReference type="ChEBI" id="CHEBI:18420"/>
    </cofactor>
</comment>
<comment type="similarity">
    <text evidence="1">Belongs to the ATP-dependent DNA ligase family.</text>
</comment>